<protein>
    <recommendedName>
        <fullName>Uncharacterized protein HI_0938</fullName>
    </recommendedName>
</protein>
<feature type="chain" id="PRO_0000077978" description="Uncharacterized protein HI_0938">
    <location>
        <begin position="1"/>
        <end position="170"/>
    </location>
</feature>
<feature type="transmembrane region" description="Helical" evidence="1">
    <location>
        <begin position="7"/>
        <end position="27"/>
    </location>
</feature>
<proteinExistence type="predicted"/>
<organism>
    <name type="scientific">Haemophilus influenzae (strain ATCC 51907 / DSM 11121 / KW20 / Rd)</name>
    <dbReference type="NCBI Taxonomy" id="71421"/>
    <lineage>
        <taxon>Bacteria</taxon>
        <taxon>Pseudomonadati</taxon>
        <taxon>Pseudomonadota</taxon>
        <taxon>Gammaproteobacteria</taxon>
        <taxon>Pasteurellales</taxon>
        <taxon>Pasteurellaceae</taxon>
        <taxon>Haemophilus</taxon>
    </lineage>
</organism>
<comment type="subcellular location">
    <subcellularLocation>
        <location evidence="2">Membrane</location>
        <topology evidence="2">Single-pass membrane protein</topology>
    </subcellularLocation>
</comment>
<keyword id="KW-0472">Membrane</keyword>
<keyword id="KW-1185">Reference proteome</keyword>
<keyword id="KW-0812">Transmembrane</keyword>
<keyword id="KW-1133">Transmembrane helix</keyword>
<dbReference type="EMBL" id="L42023">
    <property type="protein sequence ID" value="AAC22602.1"/>
    <property type="molecule type" value="Genomic_DNA"/>
</dbReference>
<dbReference type="PIR" id="G64016">
    <property type="entry name" value="G64016"/>
</dbReference>
<dbReference type="RefSeq" id="NP_439098.1">
    <property type="nucleotide sequence ID" value="NC_000907.1"/>
</dbReference>
<dbReference type="STRING" id="71421.HI_0938"/>
<dbReference type="EnsemblBacteria" id="AAC22602">
    <property type="protein sequence ID" value="AAC22602"/>
    <property type="gene ID" value="HI_0938"/>
</dbReference>
<dbReference type="KEGG" id="hin:HI_0938"/>
<dbReference type="PATRIC" id="fig|71421.8.peg.979"/>
<dbReference type="eggNOG" id="COG2165">
    <property type="taxonomic scope" value="Bacteria"/>
</dbReference>
<dbReference type="HOGENOM" id="CLU_1568551_0_0_6"/>
<dbReference type="OrthoDB" id="5690345at2"/>
<dbReference type="BioCyc" id="HINF71421:G1GJ1-978-MONOMER"/>
<dbReference type="Proteomes" id="UP000000579">
    <property type="component" value="Chromosome"/>
</dbReference>
<dbReference type="GO" id="GO:0016020">
    <property type="term" value="C:membrane"/>
    <property type="evidence" value="ECO:0007669"/>
    <property type="project" value="UniProtKB-SubCell"/>
</dbReference>
<dbReference type="InterPro" id="IPR012902">
    <property type="entry name" value="N_methyl_site"/>
</dbReference>
<dbReference type="InterPro" id="IPR045584">
    <property type="entry name" value="Pilin-like"/>
</dbReference>
<dbReference type="NCBIfam" id="TIGR02532">
    <property type="entry name" value="IV_pilin_GFxxxE"/>
    <property type="match status" value="1"/>
</dbReference>
<dbReference type="Pfam" id="PF07963">
    <property type="entry name" value="N_methyl"/>
    <property type="match status" value="1"/>
</dbReference>
<dbReference type="SUPFAM" id="SSF54523">
    <property type="entry name" value="Pili subunits"/>
    <property type="match status" value="1"/>
</dbReference>
<gene>
    <name type="ordered locus">HI_0938</name>
</gene>
<sequence>MQKGMTLVELLIGLAIISIALNFAVPLWKTDSPKTILAKEQHRLYLFLRQIQARAENSSEVWFLLINRNLATQQWCLTAQVKNNQTCDCLNPINCPKEVYAHFYYPYFPNKTMIQSHHIYPKEITRFDGIRNTIVTRCFILQAENERTLFLFFNVGSIRVKTNQFDSACN</sequence>
<name>Y938_HAEIN</name>
<reference key="1">
    <citation type="journal article" date="1995" name="Science">
        <title>Whole-genome random sequencing and assembly of Haemophilus influenzae Rd.</title>
        <authorList>
            <person name="Fleischmann R.D."/>
            <person name="Adams M.D."/>
            <person name="White O."/>
            <person name="Clayton R.A."/>
            <person name="Kirkness E.F."/>
            <person name="Kerlavage A.R."/>
            <person name="Bult C.J."/>
            <person name="Tomb J.-F."/>
            <person name="Dougherty B.A."/>
            <person name="Merrick J.M."/>
            <person name="McKenney K."/>
            <person name="Sutton G.G."/>
            <person name="FitzHugh W."/>
            <person name="Fields C.A."/>
            <person name="Gocayne J.D."/>
            <person name="Scott J.D."/>
            <person name="Shirley R."/>
            <person name="Liu L.-I."/>
            <person name="Glodek A."/>
            <person name="Kelley J.M."/>
            <person name="Weidman J.F."/>
            <person name="Phillips C.A."/>
            <person name="Spriggs T."/>
            <person name="Hedblom E."/>
            <person name="Cotton M.D."/>
            <person name="Utterback T.R."/>
            <person name="Hanna M.C."/>
            <person name="Nguyen D.T."/>
            <person name="Saudek D.M."/>
            <person name="Brandon R.C."/>
            <person name="Fine L.D."/>
            <person name="Fritchman J.L."/>
            <person name="Fuhrmann J.L."/>
            <person name="Geoghagen N.S.M."/>
            <person name="Gnehm C.L."/>
            <person name="McDonald L.A."/>
            <person name="Small K.V."/>
            <person name="Fraser C.M."/>
            <person name="Smith H.O."/>
            <person name="Venter J.C."/>
        </authorList>
    </citation>
    <scope>NUCLEOTIDE SEQUENCE [LARGE SCALE GENOMIC DNA]</scope>
    <source>
        <strain>ATCC 51907 / DSM 11121 / KW20 / Rd</strain>
    </source>
</reference>
<evidence type="ECO:0000255" key="1"/>
<evidence type="ECO:0000305" key="2"/>
<accession>P44079</accession>